<comment type="function">
    <text evidence="1">Catalyzes the 2-thiolation of uridine at the wobble position (U34) of tRNA, leading to the formation of s(2)U34.</text>
</comment>
<comment type="catalytic activity">
    <reaction evidence="1">
        <text>S-sulfanyl-L-cysteinyl-[protein] + uridine(34) in tRNA + AH2 + ATP = 2-thiouridine(34) in tRNA + L-cysteinyl-[protein] + A + AMP + diphosphate + H(+)</text>
        <dbReference type="Rhea" id="RHEA:47032"/>
        <dbReference type="Rhea" id="RHEA-COMP:10131"/>
        <dbReference type="Rhea" id="RHEA-COMP:11726"/>
        <dbReference type="Rhea" id="RHEA-COMP:11727"/>
        <dbReference type="Rhea" id="RHEA-COMP:11728"/>
        <dbReference type="ChEBI" id="CHEBI:13193"/>
        <dbReference type="ChEBI" id="CHEBI:15378"/>
        <dbReference type="ChEBI" id="CHEBI:17499"/>
        <dbReference type="ChEBI" id="CHEBI:29950"/>
        <dbReference type="ChEBI" id="CHEBI:30616"/>
        <dbReference type="ChEBI" id="CHEBI:33019"/>
        <dbReference type="ChEBI" id="CHEBI:61963"/>
        <dbReference type="ChEBI" id="CHEBI:65315"/>
        <dbReference type="ChEBI" id="CHEBI:87170"/>
        <dbReference type="ChEBI" id="CHEBI:456215"/>
        <dbReference type="EC" id="2.8.1.13"/>
    </reaction>
</comment>
<comment type="subcellular location">
    <subcellularLocation>
        <location evidence="1">Cytoplasm</location>
    </subcellularLocation>
</comment>
<comment type="similarity">
    <text evidence="1">Belongs to the MnmA/TRMU family.</text>
</comment>
<gene>
    <name evidence="1" type="primary">mnmA</name>
    <name type="ordered locus">Pnuc_1796</name>
</gene>
<feature type="chain" id="PRO_0000349740" description="tRNA-specific 2-thiouridylase MnmA">
    <location>
        <begin position="1"/>
        <end position="370"/>
    </location>
</feature>
<feature type="region of interest" description="Interaction with target base in tRNA" evidence="1">
    <location>
        <begin position="106"/>
        <end position="108"/>
    </location>
</feature>
<feature type="region of interest" description="Interaction with tRNA" evidence="1">
    <location>
        <begin position="157"/>
        <end position="159"/>
    </location>
</feature>
<feature type="region of interest" description="Interaction with tRNA" evidence="1">
    <location>
        <begin position="318"/>
        <end position="319"/>
    </location>
</feature>
<feature type="active site" description="Nucleophile" evidence="1">
    <location>
        <position position="111"/>
    </location>
</feature>
<feature type="active site" description="Cysteine persulfide intermediate" evidence="1">
    <location>
        <position position="207"/>
    </location>
</feature>
<feature type="binding site" evidence="1">
    <location>
        <begin position="20"/>
        <end position="27"/>
    </location>
    <ligand>
        <name>ATP</name>
        <dbReference type="ChEBI" id="CHEBI:30616"/>
    </ligand>
</feature>
<feature type="binding site" evidence="1">
    <location>
        <position position="46"/>
    </location>
    <ligand>
        <name>ATP</name>
        <dbReference type="ChEBI" id="CHEBI:30616"/>
    </ligand>
</feature>
<feature type="binding site" evidence="1">
    <location>
        <position position="135"/>
    </location>
    <ligand>
        <name>ATP</name>
        <dbReference type="ChEBI" id="CHEBI:30616"/>
    </ligand>
</feature>
<feature type="site" description="Interaction with tRNA" evidence="1">
    <location>
        <position position="136"/>
    </location>
</feature>
<feature type="site" description="Interaction with tRNA" evidence="1">
    <location>
        <position position="352"/>
    </location>
</feature>
<feature type="disulfide bond" description="Alternate" evidence="1">
    <location>
        <begin position="111"/>
        <end position="207"/>
    </location>
</feature>
<reference key="1">
    <citation type="journal article" date="2012" name="Stand. Genomic Sci.">
        <title>Complete genome sequence of Polynucleobacter necessarius subsp. asymbioticus type strain (QLW-P1DMWA-1(T)).</title>
        <authorList>
            <person name="Meincke L."/>
            <person name="Copeland A."/>
            <person name="Lapidus A."/>
            <person name="Lucas S."/>
            <person name="Berry K.W."/>
            <person name="Del Rio T.G."/>
            <person name="Hammon N."/>
            <person name="Dalin E."/>
            <person name="Tice H."/>
            <person name="Pitluck S."/>
            <person name="Richardson P."/>
            <person name="Bruce D."/>
            <person name="Goodwin L."/>
            <person name="Han C."/>
            <person name="Tapia R."/>
            <person name="Detter J.C."/>
            <person name="Schmutz J."/>
            <person name="Brettin T."/>
            <person name="Larimer F."/>
            <person name="Land M."/>
            <person name="Hauser L."/>
            <person name="Kyrpides N.C."/>
            <person name="Ivanova N."/>
            <person name="Goker M."/>
            <person name="Woyke T."/>
            <person name="Wu Q.L."/>
            <person name="Pockl M."/>
            <person name="Hahn M.W."/>
            <person name="Klenk H.P."/>
        </authorList>
    </citation>
    <scope>NUCLEOTIDE SEQUENCE [LARGE SCALE GENOMIC DNA]</scope>
    <source>
        <strain>DSM 18221 / CIP 109841 / QLW-P1DMWA-1</strain>
    </source>
</reference>
<evidence type="ECO:0000255" key="1">
    <source>
        <dbReference type="HAMAP-Rule" id="MF_00144"/>
    </source>
</evidence>
<proteinExistence type="inferred from homology"/>
<name>MNMA_POLAQ</name>
<sequence length="370" mass="40521">MISLNSSSIPSSQTKKVVIGMSGGVDSSVAAWMLKEQGFEVIGLFMKNWEDDDNDEYCSARQDWLDVVSVADMIGIDVEAVNFAAEYRERVFADFLCEYAAGRTPNPDVLCNAEIKFKAFLDHAMSLGADAIATGHYARVRHEGGRVQLLKAVDASKDQSYFLHRLTQQQLSKVMFPLGEIPKTEVRKIAEQIGLHNAKKKDSTGICFIGERPFREFLNRYLPRVPGPIKTPEGKTVGEHMGLAFFTLGQRKGIGLGGSQDGNGDAWYVARKDMANNTLYVAQGHEHPWLLANKLSAVDASWVSGAAPEPGSYSAKTRYRQTDSACTYIADIDTNNFSLSFPEAQWAVTPGQSAVLYDGDICLGGGIIST</sequence>
<organism>
    <name type="scientific">Polynucleobacter asymbioticus (strain DSM 18221 / CIP 109841 / QLW-P1DMWA-1)</name>
    <name type="common">Polynucleobacter necessarius subsp. asymbioticus</name>
    <dbReference type="NCBI Taxonomy" id="312153"/>
    <lineage>
        <taxon>Bacteria</taxon>
        <taxon>Pseudomonadati</taxon>
        <taxon>Pseudomonadota</taxon>
        <taxon>Betaproteobacteria</taxon>
        <taxon>Burkholderiales</taxon>
        <taxon>Burkholderiaceae</taxon>
        <taxon>Polynucleobacter</taxon>
    </lineage>
</organism>
<protein>
    <recommendedName>
        <fullName evidence="1">tRNA-specific 2-thiouridylase MnmA</fullName>
        <ecNumber evidence="1">2.8.1.13</ecNumber>
    </recommendedName>
</protein>
<accession>A4SZU5</accession>
<keyword id="KW-0067">ATP-binding</keyword>
<keyword id="KW-0963">Cytoplasm</keyword>
<keyword id="KW-1015">Disulfide bond</keyword>
<keyword id="KW-0547">Nucleotide-binding</keyword>
<keyword id="KW-1185">Reference proteome</keyword>
<keyword id="KW-0694">RNA-binding</keyword>
<keyword id="KW-0808">Transferase</keyword>
<keyword id="KW-0819">tRNA processing</keyword>
<keyword id="KW-0820">tRNA-binding</keyword>
<dbReference type="EC" id="2.8.1.13" evidence="1"/>
<dbReference type="EMBL" id="CP000655">
    <property type="protein sequence ID" value="ABP35009.1"/>
    <property type="molecule type" value="Genomic_DNA"/>
</dbReference>
<dbReference type="RefSeq" id="WP_011903632.1">
    <property type="nucleotide sequence ID" value="NC_009379.1"/>
</dbReference>
<dbReference type="SMR" id="A4SZU5"/>
<dbReference type="GeneID" id="31482185"/>
<dbReference type="KEGG" id="pnu:Pnuc_1796"/>
<dbReference type="eggNOG" id="COG0482">
    <property type="taxonomic scope" value="Bacteria"/>
</dbReference>
<dbReference type="HOGENOM" id="CLU_035188_1_0_4"/>
<dbReference type="Proteomes" id="UP000000231">
    <property type="component" value="Chromosome"/>
</dbReference>
<dbReference type="GO" id="GO:0005737">
    <property type="term" value="C:cytoplasm"/>
    <property type="evidence" value="ECO:0007669"/>
    <property type="project" value="UniProtKB-SubCell"/>
</dbReference>
<dbReference type="GO" id="GO:0005524">
    <property type="term" value="F:ATP binding"/>
    <property type="evidence" value="ECO:0007669"/>
    <property type="project" value="UniProtKB-KW"/>
</dbReference>
<dbReference type="GO" id="GO:0000049">
    <property type="term" value="F:tRNA binding"/>
    <property type="evidence" value="ECO:0007669"/>
    <property type="project" value="UniProtKB-KW"/>
</dbReference>
<dbReference type="GO" id="GO:0103016">
    <property type="term" value="F:tRNA-uridine 2-sulfurtransferase activity"/>
    <property type="evidence" value="ECO:0007669"/>
    <property type="project" value="UniProtKB-EC"/>
</dbReference>
<dbReference type="GO" id="GO:0002143">
    <property type="term" value="P:tRNA wobble position uridine thiolation"/>
    <property type="evidence" value="ECO:0007669"/>
    <property type="project" value="TreeGrafter"/>
</dbReference>
<dbReference type="CDD" id="cd01998">
    <property type="entry name" value="MnmA_TRMU-like"/>
    <property type="match status" value="1"/>
</dbReference>
<dbReference type="FunFam" id="2.30.30.280:FF:000001">
    <property type="entry name" value="tRNA-specific 2-thiouridylase MnmA"/>
    <property type="match status" value="1"/>
</dbReference>
<dbReference type="FunFam" id="2.40.30.10:FF:000023">
    <property type="entry name" value="tRNA-specific 2-thiouridylase MnmA"/>
    <property type="match status" value="1"/>
</dbReference>
<dbReference type="FunFam" id="3.40.50.620:FF:000004">
    <property type="entry name" value="tRNA-specific 2-thiouridylase MnmA"/>
    <property type="match status" value="1"/>
</dbReference>
<dbReference type="Gene3D" id="2.30.30.280">
    <property type="entry name" value="Adenine nucleotide alpha hydrolases-like domains"/>
    <property type="match status" value="1"/>
</dbReference>
<dbReference type="Gene3D" id="3.40.50.620">
    <property type="entry name" value="HUPs"/>
    <property type="match status" value="1"/>
</dbReference>
<dbReference type="Gene3D" id="2.40.30.10">
    <property type="entry name" value="Translation factors"/>
    <property type="match status" value="1"/>
</dbReference>
<dbReference type="HAMAP" id="MF_00144">
    <property type="entry name" value="tRNA_thiouridyl_MnmA"/>
    <property type="match status" value="1"/>
</dbReference>
<dbReference type="InterPro" id="IPR004506">
    <property type="entry name" value="MnmA-like"/>
</dbReference>
<dbReference type="InterPro" id="IPR046885">
    <property type="entry name" value="MnmA-like_C"/>
</dbReference>
<dbReference type="InterPro" id="IPR046884">
    <property type="entry name" value="MnmA-like_central"/>
</dbReference>
<dbReference type="InterPro" id="IPR023382">
    <property type="entry name" value="MnmA-like_central_sf"/>
</dbReference>
<dbReference type="InterPro" id="IPR001763">
    <property type="entry name" value="Rhodanese-like_dom"/>
</dbReference>
<dbReference type="InterPro" id="IPR014729">
    <property type="entry name" value="Rossmann-like_a/b/a_fold"/>
</dbReference>
<dbReference type="NCBIfam" id="NF001138">
    <property type="entry name" value="PRK00143.1"/>
    <property type="match status" value="1"/>
</dbReference>
<dbReference type="NCBIfam" id="TIGR00420">
    <property type="entry name" value="trmU"/>
    <property type="match status" value="1"/>
</dbReference>
<dbReference type="PANTHER" id="PTHR11933:SF5">
    <property type="entry name" value="MITOCHONDRIAL TRNA-SPECIFIC 2-THIOURIDYLASE 1"/>
    <property type="match status" value="1"/>
</dbReference>
<dbReference type="PANTHER" id="PTHR11933">
    <property type="entry name" value="TRNA 5-METHYLAMINOMETHYL-2-THIOURIDYLATE -METHYLTRANSFERASE"/>
    <property type="match status" value="1"/>
</dbReference>
<dbReference type="Pfam" id="PF03054">
    <property type="entry name" value="tRNA_Me_trans"/>
    <property type="match status" value="1"/>
</dbReference>
<dbReference type="Pfam" id="PF20258">
    <property type="entry name" value="tRNA_Me_trans_C"/>
    <property type="match status" value="1"/>
</dbReference>
<dbReference type="Pfam" id="PF20259">
    <property type="entry name" value="tRNA_Me_trans_M"/>
    <property type="match status" value="1"/>
</dbReference>
<dbReference type="SUPFAM" id="SSF52402">
    <property type="entry name" value="Adenine nucleotide alpha hydrolases-like"/>
    <property type="match status" value="1"/>
</dbReference>